<proteinExistence type="inferred from homology"/>
<name>CFI_ARALP</name>
<reference key="1">
    <citation type="journal article" date="2000" name="Genetics">
        <title>Nucleotide variation at the chalcone isomerase locus in Arabidopsis thaliana.</title>
        <authorList>
            <person name="Kuittinen H."/>
            <person name="Aguade M."/>
        </authorList>
    </citation>
    <scope>NUCLEOTIDE SEQUENCE [GENOMIC DNA]</scope>
    <source>
        <strain>cv. Mjaellom</strain>
    </source>
</reference>
<keyword id="KW-0284">Flavonoid biosynthesis</keyword>
<keyword id="KW-0413">Isomerase</keyword>
<organism>
    <name type="scientific">Arabidopsis lyrata subsp. petraea</name>
    <name type="common">Northern rock-cress</name>
    <name type="synonym">Cardaminopsis petraea</name>
    <dbReference type="NCBI Taxonomy" id="59691"/>
    <lineage>
        <taxon>Eukaryota</taxon>
        <taxon>Viridiplantae</taxon>
        <taxon>Streptophyta</taxon>
        <taxon>Embryophyta</taxon>
        <taxon>Tracheophyta</taxon>
        <taxon>Spermatophyta</taxon>
        <taxon>Magnoliopsida</taxon>
        <taxon>eudicotyledons</taxon>
        <taxon>Gunneridae</taxon>
        <taxon>Pentapetalae</taxon>
        <taxon>rosids</taxon>
        <taxon>malvids</taxon>
        <taxon>Brassicales</taxon>
        <taxon>Brassicaceae</taxon>
        <taxon>Camelineae</taxon>
        <taxon>Arabidopsis</taxon>
    </lineage>
</organism>
<protein>
    <recommendedName>
        <fullName>Chalcone--flavanone isomerase</fullName>
        <shortName>Chalcone isomerase</shortName>
        <ecNumber>5.5.1.6</ecNumber>
    </recommendedName>
</protein>
<dbReference type="EC" id="5.5.1.6"/>
<dbReference type="EMBL" id="AJ287322">
    <property type="protein sequence ID" value="CAB94968.1"/>
    <property type="molecule type" value="Genomic_DNA"/>
</dbReference>
<dbReference type="SMR" id="Q9LKC3"/>
<dbReference type="UniPathway" id="UPA00154"/>
<dbReference type="GO" id="GO:0045430">
    <property type="term" value="F:chalcone isomerase activity"/>
    <property type="evidence" value="ECO:0007669"/>
    <property type="project" value="UniProtKB-EC"/>
</dbReference>
<dbReference type="GO" id="GO:0009813">
    <property type="term" value="P:flavonoid biosynthetic process"/>
    <property type="evidence" value="ECO:0007669"/>
    <property type="project" value="UniProtKB-UniPathway"/>
</dbReference>
<dbReference type="Gene3D" id="1.10.890.20">
    <property type="match status" value="1"/>
</dbReference>
<dbReference type="Gene3D" id="3.50.70.10">
    <property type="match status" value="1"/>
</dbReference>
<dbReference type="InterPro" id="IPR044164">
    <property type="entry name" value="CFI"/>
</dbReference>
<dbReference type="InterPro" id="IPR016087">
    <property type="entry name" value="Chalcone_isomerase"/>
</dbReference>
<dbReference type="InterPro" id="IPR016088">
    <property type="entry name" value="Chalcone_isomerase_3-sand"/>
</dbReference>
<dbReference type="InterPro" id="IPR016089">
    <property type="entry name" value="Chalcone_isomerase_bundle_sf"/>
</dbReference>
<dbReference type="InterPro" id="IPR036298">
    <property type="entry name" value="Chalcone_isomerase_sf"/>
</dbReference>
<dbReference type="PANTHER" id="PTHR28039:SF8">
    <property type="entry name" value="CHALCONE--FLAVANONE ISOMERASE 1-RELATED"/>
    <property type="match status" value="1"/>
</dbReference>
<dbReference type="PANTHER" id="PTHR28039">
    <property type="entry name" value="CHALCONE--FLAVONONE ISOMERASE 1-RELATED"/>
    <property type="match status" value="1"/>
</dbReference>
<dbReference type="Pfam" id="PF02431">
    <property type="entry name" value="Chalcone"/>
    <property type="match status" value="1"/>
</dbReference>
<dbReference type="SUPFAM" id="SSF54626">
    <property type="entry name" value="Chalcone isomerase"/>
    <property type="match status" value="1"/>
</dbReference>
<feature type="chain" id="PRO_0000166427" description="Chalcone--flavanone isomerase">
    <location>
        <begin position="1"/>
        <end position="244"/>
    </location>
</feature>
<feature type="binding site" evidence="1">
    <location>
        <position position="57"/>
    </location>
    <ligand>
        <name>substrate</name>
    </ligand>
</feature>
<feature type="binding site" evidence="1">
    <location>
        <position position="122"/>
    </location>
    <ligand>
        <name>substrate</name>
    </ligand>
</feature>
<feature type="binding site" evidence="1">
    <location>
        <position position="199"/>
    </location>
    <ligand>
        <name>substrate</name>
    </ligand>
</feature>
<feature type="site" description="Important for catalytic activity" evidence="1">
    <location>
        <position position="115"/>
    </location>
</feature>
<evidence type="ECO:0000250" key="1"/>
<evidence type="ECO:0000305" key="2"/>
<sequence>MSFSPVSPSQFPSVTKLQVDSVTFDPSVKSPASSNPLFLGGAGVRGLDIQGKFVIFTVIGVYLESNAVPSLSVKWKGKTTEELSESVPFFREIVTGAFEKFIKVTMKLPLTGQQYSEKVTENCVAIWKSLGIYTDCEAKAVEKFLEIFKEETFPPGSSILFALSPTGSLTVAFSRDDSIPETGIAVIENKLLAEAVLESIIGKNGVSPGTRLSIAERLAKLMTKNKVEEDASNHSIDEKLAKEN</sequence>
<comment type="function">
    <text evidence="1">Catalyzes the intramolecular cyclization of bicyclic chalcones into tricyclic (S)-flavanones. Responsible for the isomerization of 4,2',4',6'-tetrahydroxychalcone (also termed chalcone) into naringenin (By similarity).</text>
</comment>
<comment type="catalytic activity">
    <reaction>
        <text>a chalcone = a flavanone.</text>
        <dbReference type="EC" id="5.5.1.6"/>
    </reaction>
</comment>
<comment type="pathway">
    <text>Secondary metabolite biosynthesis; flavonoid biosynthesis.</text>
</comment>
<comment type="miscellaneous">
    <text>Part of the biosynthetic pathway for all classes of flavonoids, a large class of secondary plant metabolites, many of which are brightly colored.</text>
</comment>
<comment type="similarity">
    <text evidence="2">Belongs to the chalcone isomerase family.</text>
</comment>
<gene>
    <name type="primary">CHI</name>
</gene>
<accession>Q9LKC3</accession>